<name>CYB_EULFC</name>
<evidence type="ECO:0000250" key="1"/>
<evidence type="ECO:0000250" key="2">
    <source>
        <dbReference type="UniProtKB" id="P00157"/>
    </source>
</evidence>
<evidence type="ECO:0000255" key="3">
    <source>
        <dbReference type="PROSITE-ProRule" id="PRU00967"/>
    </source>
</evidence>
<evidence type="ECO:0000255" key="4">
    <source>
        <dbReference type="PROSITE-ProRule" id="PRU00968"/>
    </source>
</evidence>
<organism>
    <name type="scientific">Eulemur fulvus collaris</name>
    <name type="common">Collared brown lemur</name>
    <name type="synonym">Eulemur collaris</name>
    <dbReference type="NCBI Taxonomy" id="47178"/>
    <lineage>
        <taxon>Eukaryota</taxon>
        <taxon>Metazoa</taxon>
        <taxon>Chordata</taxon>
        <taxon>Craniata</taxon>
        <taxon>Vertebrata</taxon>
        <taxon>Euteleostomi</taxon>
        <taxon>Mammalia</taxon>
        <taxon>Eutheria</taxon>
        <taxon>Euarchontoglires</taxon>
        <taxon>Primates</taxon>
        <taxon>Strepsirrhini</taxon>
        <taxon>Lemuriformes</taxon>
        <taxon>Lemuridae</taxon>
        <taxon>Eulemur</taxon>
    </lineage>
</organism>
<geneLocation type="mitochondrion"/>
<sequence length="379" mass="42594">MNNIRKNHPLMKIMNNSFIDLPAPSNISSWWNFGSLLGACLALQIITGLFLAMHYTADTTTAFSSVAHICRDVNYGWIIRYLHANGASMFFLCLFIHIGRGLYYGSFTLTETWNIGIILLFTVMATAFMGYVLPWGQMSFWGATVITNLLSAIPYIGSNLVEWIWGGFSVDKATLTRFFAFHFILPFIIAALVLVHLLFLHETGSNNPLGTSSDSDKIPFHPYYTIKDLLGLLLLILLTMMLVLFSPDLLGDPDNYTPANPLSTPPHIKPEWYFLFAYAILRSIPNKLGGVLALILSILILAIIPILHTAKQRSMLFRPLSQCLFWTLTADLFILTWIGGQPVEYPFIAIGQAASILYFTLILILMPTVSLIENKMLKW</sequence>
<feature type="chain" id="PRO_0000060954" description="Cytochrome b">
    <location>
        <begin position="1"/>
        <end position="379"/>
    </location>
</feature>
<feature type="transmembrane region" description="Helical" evidence="2">
    <location>
        <begin position="33"/>
        <end position="53"/>
    </location>
</feature>
<feature type="transmembrane region" description="Helical" evidence="2">
    <location>
        <begin position="77"/>
        <end position="98"/>
    </location>
</feature>
<feature type="transmembrane region" description="Helical" evidence="2">
    <location>
        <begin position="113"/>
        <end position="133"/>
    </location>
</feature>
<feature type="transmembrane region" description="Helical" evidence="2">
    <location>
        <begin position="178"/>
        <end position="198"/>
    </location>
</feature>
<feature type="transmembrane region" description="Helical" evidence="2">
    <location>
        <begin position="226"/>
        <end position="246"/>
    </location>
</feature>
<feature type="transmembrane region" description="Helical" evidence="2">
    <location>
        <begin position="288"/>
        <end position="308"/>
    </location>
</feature>
<feature type="transmembrane region" description="Helical" evidence="2">
    <location>
        <begin position="320"/>
        <end position="340"/>
    </location>
</feature>
<feature type="transmembrane region" description="Helical" evidence="2">
    <location>
        <begin position="347"/>
        <end position="367"/>
    </location>
</feature>
<feature type="binding site" description="axial binding residue" evidence="2">
    <location>
        <position position="83"/>
    </location>
    <ligand>
        <name>heme b</name>
        <dbReference type="ChEBI" id="CHEBI:60344"/>
        <label>b562</label>
    </ligand>
    <ligandPart>
        <name>Fe</name>
        <dbReference type="ChEBI" id="CHEBI:18248"/>
    </ligandPart>
</feature>
<feature type="binding site" description="axial binding residue" evidence="2">
    <location>
        <position position="97"/>
    </location>
    <ligand>
        <name>heme b</name>
        <dbReference type="ChEBI" id="CHEBI:60344"/>
        <label>b566</label>
    </ligand>
    <ligandPart>
        <name>Fe</name>
        <dbReference type="ChEBI" id="CHEBI:18248"/>
    </ligandPart>
</feature>
<feature type="binding site" description="axial binding residue" evidence="2">
    <location>
        <position position="182"/>
    </location>
    <ligand>
        <name>heme b</name>
        <dbReference type="ChEBI" id="CHEBI:60344"/>
        <label>b562</label>
    </ligand>
    <ligandPart>
        <name>Fe</name>
        <dbReference type="ChEBI" id="CHEBI:18248"/>
    </ligandPart>
</feature>
<feature type="binding site" description="axial binding residue" evidence="2">
    <location>
        <position position="196"/>
    </location>
    <ligand>
        <name>heme b</name>
        <dbReference type="ChEBI" id="CHEBI:60344"/>
        <label>b566</label>
    </ligand>
    <ligandPart>
        <name>Fe</name>
        <dbReference type="ChEBI" id="CHEBI:18248"/>
    </ligandPart>
</feature>
<feature type="binding site" evidence="2">
    <location>
        <position position="201"/>
    </location>
    <ligand>
        <name>a ubiquinone</name>
        <dbReference type="ChEBI" id="CHEBI:16389"/>
    </ligand>
</feature>
<keyword id="KW-0249">Electron transport</keyword>
<keyword id="KW-0349">Heme</keyword>
<keyword id="KW-0408">Iron</keyword>
<keyword id="KW-0472">Membrane</keyword>
<keyword id="KW-0479">Metal-binding</keyword>
<keyword id="KW-0496">Mitochondrion</keyword>
<keyword id="KW-0999">Mitochondrion inner membrane</keyword>
<keyword id="KW-0679">Respiratory chain</keyword>
<keyword id="KW-0812">Transmembrane</keyword>
<keyword id="KW-1133">Transmembrane helix</keyword>
<keyword id="KW-0813">Transport</keyword>
<keyword id="KW-0830">Ubiquinone</keyword>
<dbReference type="EMBL" id="U53576">
    <property type="protein sequence ID" value="AAC50523.1"/>
    <property type="molecule type" value="Genomic_DNA"/>
</dbReference>
<dbReference type="SMR" id="Q34459"/>
<dbReference type="GO" id="GO:0005743">
    <property type="term" value="C:mitochondrial inner membrane"/>
    <property type="evidence" value="ECO:0007669"/>
    <property type="project" value="UniProtKB-SubCell"/>
</dbReference>
<dbReference type="GO" id="GO:0045275">
    <property type="term" value="C:respiratory chain complex III"/>
    <property type="evidence" value="ECO:0007669"/>
    <property type="project" value="InterPro"/>
</dbReference>
<dbReference type="GO" id="GO:0046872">
    <property type="term" value="F:metal ion binding"/>
    <property type="evidence" value="ECO:0007669"/>
    <property type="project" value="UniProtKB-KW"/>
</dbReference>
<dbReference type="GO" id="GO:0008121">
    <property type="term" value="F:ubiquinol-cytochrome-c reductase activity"/>
    <property type="evidence" value="ECO:0007669"/>
    <property type="project" value="InterPro"/>
</dbReference>
<dbReference type="GO" id="GO:0006122">
    <property type="term" value="P:mitochondrial electron transport, ubiquinol to cytochrome c"/>
    <property type="evidence" value="ECO:0007669"/>
    <property type="project" value="TreeGrafter"/>
</dbReference>
<dbReference type="CDD" id="cd00290">
    <property type="entry name" value="cytochrome_b_C"/>
    <property type="match status" value="1"/>
</dbReference>
<dbReference type="CDD" id="cd00284">
    <property type="entry name" value="Cytochrome_b_N"/>
    <property type="match status" value="1"/>
</dbReference>
<dbReference type="FunFam" id="1.20.810.10:FF:000002">
    <property type="entry name" value="Cytochrome b"/>
    <property type="match status" value="1"/>
</dbReference>
<dbReference type="Gene3D" id="1.20.810.10">
    <property type="entry name" value="Cytochrome Bc1 Complex, Chain C"/>
    <property type="match status" value="1"/>
</dbReference>
<dbReference type="InterPro" id="IPR005798">
    <property type="entry name" value="Cyt_b/b6_C"/>
</dbReference>
<dbReference type="InterPro" id="IPR036150">
    <property type="entry name" value="Cyt_b/b6_C_sf"/>
</dbReference>
<dbReference type="InterPro" id="IPR005797">
    <property type="entry name" value="Cyt_b/b6_N"/>
</dbReference>
<dbReference type="InterPro" id="IPR027387">
    <property type="entry name" value="Cytb/b6-like_sf"/>
</dbReference>
<dbReference type="InterPro" id="IPR030689">
    <property type="entry name" value="Cytochrome_b"/>
</dbReference>
<dbReference type="InterPro" id="IPR048260">
    <property type="entry name" value="Cytochrome_b_C_euk/bac"/>
</dbReference>
<dbReference type="InterPro" id="IPR048259">
    <property type="entry name" value="Cytochrome_b_N_euk/bac"/>
</dbReference>
<dbReference type="InterPro" id="IPR016174">
    <property type="entry name" value="Di-haem_cyt_TM"/>
</dbReference>
<dbReference type="PANTHER" id="PTHR19271">
    <property type="entry name" value="CYTOCHROME B"/>
    <property type="match status" value="1"/>
</dbReference>
<dbReference type="PANTHER" id="PTHR19271:SF16">
    <property type="entry name" value="CYTOCHROME B"/>
    <property type="match status" value="1"/>
</dbReference>
<dbReference type="Pfam" id="PF00032">
    <property type="entry name" value="Cytochrom_B_C"/>
    <property type="match status" value="1"/>
</dbReference>
<dbReference type="Pfam" id="PF00033">
    <property type="entry name" value="Cytochrome_B"/>
    <property type="match status" value="1"/>
</dbReference>
<dbReference type="PIRSF" id="PIRSF038885">
    <property type="entry name" value="COB"/>
    <property type="match status" value="1"/>
</dbReference>
<dbReference type="SUPFAM" id="SSF81648">
    <property type="entry name" value="a domain/subunit of cytochrome bc1 complex (Ubiquinol-cytochrome c reductase)"/>
    <property type="match status" value="1"/>
</dbReference>
<dbReference type="SUPFAM" id="SSF81342">
    <property type="entry name" value="Transmembrane di-heme cytochromes"/>
    <property type="match status" value="1"/>
</dbReference>
<dbReference type="PROSITE" id="PS51003">
    <property type="entry name" value="CYTB_CTER"/>
    <property type="match status" value="1"/>
</dbReference>
<dbReference type="PROSITE" id="PS51002">
    <property type="entry name" value="CYTB_NTER"/>
    <property type="match status" value="1"/>
</dbReference>
<comment type="function">
    <text evidence="2">Component of the ubiquinol-cytochrome c reductase complex (complex III or cytochrome b-c1 complex) that is part of the mitochondrial respiratory chain. The b-c1 complex mediates electron transfer from ubiquinol to cytochrome c. Contributes to the generation of a proton gradient across the mitochondrial membrane that is then used for ATP synthesis.</text>
</comment>
<comment type="cofactor">
    <cofactor evidence="2">
        <name>heme b</name>
        <dbReference type="ChEBI" id="CHEBI:60344"/>
    </cofactor>
    <text evidence="2">Binds 2 heme b groups non-covalently.</text>
</comment>
<comment type="subunit">
    <text evidence="2">The cytochrome bc1 complex contains 11 subunits: 3 respiratory subunits (MT-CYB, CYC1 and UQCRFS1), 2 core proteins (UQCRC1 and UQCRC2) and 6 low-molecular weight proteins (UQCRH/QCR6, UQCRB/QCR7, UQCRQ/QCR8, UQCR10/QCR9, UQCR11/QCR10 and a cleavage product of UQCRFS1). This cytochrome bc1 complex then forms a dimer.</text>
</comment>
<comment type="subcellular location">
    <subcellularLocation>
        <location evidence="2">Mitochondrion inner membrane</location>
        <topology evidence="2">Multi-pass membrane protein</topology>
    </subcellularLocation>
</comment>
<comment type="miscellaneous">
    <text evidence="1">Heme 1 (or BL or b562) is low-potential and absorbs at about 562 nm, and heme 2 (or BH or b566) is high-potential and absorbs at about 566 nm.</text>
</comment>
<comment type="similarity">
    <text evidence="3 4">Belongs to the cytochrome b family.</text>
</comment>
<comment type="caution">
    <text evidence="2">The full-length protein contains only eight transmembrane helices, not nine as predicted by bioinformatics tools.</text>
</comment>
<gene>
    <name type="primary">MT-CYB</name>
    <name type="synonym">COB</name>
    <name type="synonym">CYTB</name>
    <name type="synonym">MTCYB</name>
</gene>
<protein>
    <recommendedName>
        <fullName>Cytochrome b</fullName>
    </recommendedName>
    <alternativeName>
        <fullName>Complex III subunit 3</fullName>
    </alternativeName>
    <alternativeName>
        <fullName>Complex III subunit III</fullName>
    </alternativeName>
    <alternativeName>
        <fullName>Cytochrome b-c1 complex subunit 3</fullName>
    </alternativeName>
    <alternativeName>
        <fullName>Ubiquinol-cytochrome-c reductase complex cytochrome b subunit</fullName>
    </alternativeName>
</protein>
<reference key="1">
    <citation type="journal article" date="1996" name="Proc. Natl. Acad. Sci. U.S.A.">
        <title>Ancient single origin for Malagasy primates.</title>
        <authorList>
            <person name="Yoder A.D."/>
            <person name="Cartmill M."/>
            <person name="Ruvolo M."/>
            <person name="Smith K."/>
            <person name="Vilgalys R."/>
        </authorList>
    </citation>
    <scope>NUCLEOTIDE SEQUENCE [GENOMIC DNA]</scope>
</reference>
<accession>Q34459</accession>
<proteinExistence type="inferred from homology"/>